<proteinExistence type="inferred from homology"/>
<reference key="1">
    <citation type="journal article" date="2000" name="J. Gen. Virol.">
        <title>An aberrant genotype revealed in recombinant hepatitis B virus strains from Vietnam.</title>
        <authorList>
            <person name="Hannoun C."/>
            <person name="Norder H."/>
            <person name="Lindh M."/>
        </authorList>
    </citation>
    <scope>NUCLEOTIDE SEQUENCE [GENOMIC DNA]</scope>
</reference>
<reference key="2">
    <citation type="journal article" date="2004" name="J. Virol.">
        <title>The enigmatic X gene of hepatitis B virus.</title>
        <authorList>
            <person name="Bouchard M.J."/>
            <person name="Schneider R.J."/>
        </authorList>
    </citation>
    <scope>REVIEW</scope>
</reference>
<reference key="3">
    <citation type="journal article" date="2006" name="Cancer Sci.">
        <title>Molecular functions and biological roles of hepatitis B virus x protein.</title>
        <authorList>
            <person name="Tang H."/>
            <person name="Oishi N."/>
            <person name="Kaneko S."/>
            <person name="Murakami S."/>
        </authorList>
    </citation>
    <scope>REVIEW</scope>
</reference>
<organismHost>
    <name type="scientific">Homo sapiens</name>
    <name type="common">Human</name>
    <dbReference type="NCBI Taxonomy" id="9606"/>
</organismHost>
<organismHost>
    <name type="scientific">Pan troglodytes</name>
    <name type="common">Chimpanzee</name>
    <dbReference type="NCBI Taxonomy" id="9598"/>
</organismHost>
<protein>
    <recommendedName>
        <fullName evidence="1">Protein X</fullName>
    </recommendedName>
    <alternativeName>
        <fullName evidence="1">HBx</fullName>
    </alternativeName>
    <alternativeName>
        <fullName evidence="1">Peptide X</fullName>
    </alternativeName>
    <alternativeName>
        <fullName evidence="1">pX</fullName>
    </alternativeName>
</protein>
<evidence type="ECO:0000255" key="1">
    <source>
        <dbReference type="HAMAP-Rule" id="MF_04074"/>
    </source>
</evidence>
<feature type="chain" id="PRO_0000319904" description="Protein X">
    <location>
        <begin position="1"/>
        <end position="154"/>
    </location>
</feature>
<feature type="region of interest" description="Mitochondrial targeting sequence" evidence="1">
    <location>
        <begin position="68"/>
        <end position="117"/>
    </location>
</feature>
<name>X_HBVC0</name>
<sequence length="154" mass="16479">MAARLCCQLDPARDVLCLRPVGAESRGRPVSGSLGALPSPSPSAVPADHGAHLSLRGLPVCAFSSAGPCALRFTSARRMETTVNANQVLPKVLHKRTLGLSALSTTDLEAYFKDCVFKDWEELGEEIRLKVFVLGGCRHKLVCVPAPCNFFTSA</sequence>
<dbReference type="EMBL" id="AF241410">
    <property type="protein sequence ID" value="AAG17593.1"/>
    <property type="molecule type" value="Genomic_DNA"/>
</dbReference>
<dbReference type="SMR" id="Q9E6S8"/>
<dbReference type="Proteomes" id="UP000007920">
    <property type="component" value="Genome"/>
</dbReference>
<dbReference type="GO" id="GO:0033650">
    <property type="term" value="C:host cell mitochondrion"/>
    <property type="evidence" value="ECO:0007669"/>
    <property type="project" value="UniProtKB-SubCell"/>
</dbReference>
<dbReference type="GO" id="GO:0042025">
    <property type="term" value="C:host cell nucleus"/>
    <property type="evidence" value="ECO:0007669"/>
    <property type="project" value="UniProtKB-SubCell"/>
</dbReference>
<dbReference type="GO" id="GO:0006351">
    <property type="term" value="P:DNA-templated transcription"/>
    <property type="evidence" value="ECO:0007669"/>
    <property type="project" value="UniProtKB-UniRule"/>
</dbReference>
<dbReference type="GO" id="GO:0085033">
    <property type="term" value="P:symbiont-mediated activation of host NF-kappaB cascade"/>
    <property type="evidence" value="ECO:0007669"/>
    <property type="project" value="UniProtKB-UniRule"/>
</dbReference>
<dbReference type="GO" id="GO:0039592">
    <property type="term" value="P:symbiont-mediated arrest of host cell cycle during G2/M transition"/>
    <property type="evidence" value="ECO:0007669"/>
    <property type="project" value="UniProtKB-UniRule"/>
</dbReference>
<dbReference type="GO" id="GO:0019079">
    <property type="term" value="P:viral genome replication"/>
    <property type="evidence" value="ECO:0007669"/>
    <property type="project" value="UniProtKB-UniRule"/>
</dbReference>
<dbReference type="HAMAP" id="MF_04074">
    <property type="entry name" value="HBV_X"/>
    <property type="match status" value="1"/>
</dbReference>
<dbReference type="InterPro" id="IPR000236">
    <property type="entry name" value="Transactivation_prot_X"/>
</dbReference>
<dbReference type="Pfam" id="PF00739">
    <property type="entry name" value="X"/>
    <property type="match status" value="1"/>
</dbReference>
<accession>Q9E6S8</accession>
<keyword id="KW-1074">Activation of host NF-kappa-B by virus</keyword>
<keyword id="KW-0010">Activator</keyword>
<keyword id="KW-0053">Apoptosis</keyword>
<keyword id="KW-1035">Host cytoplasm</keyword>
<keyword id="KW-1079">Host G2/M cell cycle arrest by virus</keyword>
<keyword id="KW-1045">Host mitochondrion</keyword>
<keyword id="KW-1048">Host nucleus</keyword>
<keyword id="KW-0945">Host-virus interaction</keyword>
<keyword id="KW-1121">Modulation of host cell cycle by virus</keyword>
<keyword id="KW-0804">Transcription</keyword>
<keyword id="KW-0805">Transcription regulation</keyword>
<organism>
    <name type="scientific">Hepatitis B virus genotype C (isolate Vietnam/3270/2000)</name>
    <name type="common">HBV-C</name>
    <dbReference type="NCBI Taxonomy" id="489472"/>
    <lineage>
        <taxon>Viruses</taxon>
        <taxon>Riboviria</taxon>
        <taxon>Pararnavirae</taxon>
        <taxon>Artverviricota</taxon>
        <taxon>Revtraviricetes</taxon>
        <taxon>Blubervirales</taxon>
        <taxon>Hepadnaviridae</taxon>
        <taxon>Orthohepadnavirus</taxon>
        <taxon>Hepatitis B virus</taxon>
        <taxon>hepatitis B virus genotype C</taxon>
    </lineage>
</organism>
<gene>
    <name evidence="1" type="primary">X</name>
</gene>
<comment type="function">
    <text evidence="1">Multifunctional protein that plays a role in silencing host antiviral defenses and promoting viral transcription. Does not seem to be essential for HBV infection. May be directly involved in development of cirrhosis and liver cancer (hepatocellular carcinoma). Most of cytosolic activities involve modulation of cytosolic calcium. The effect on apoptosis is controversial depending on the cell types in which the studies have been conducted. May induce apoptosis by localizing in mitochondria and causing loss of mitochondrial membrane potential. May also modulate apoptosis by binding host CFLAR, a key regulator of the death-inducing signaling complex (DISC). Promotes viral transcription by using the host E3 ubiquitin ligase DDB1 to target the SMC5-SMC6 complex to proteasomal degradation. This host complex would otherwise bind to viral episomal DNA, and prevents its transcription. Moderately stimulates transcription of many different viral and cellular transcription elements. Promoters and enhancers stimulated by HBx contain DNA binding sites for NF-kappa-B, AP-1, AP-2, c-EBP, ATF/CREB, or the calcium-activated factor NF-AT.</text>
</comment>
<comment type="subunit">
    <text evidence="1">May form homodimer. May interact with host CEBPA, CFLAR, CREB1, DDB1, E4F1, HBXIP, HSPD1/HSP60, NFKBIA, POLR2E and SMAD4. Interacts with host SMC5-SMC6 complex and induces its degradation. Interacts with host TRPC4AP; leading to prevent ubiquitination of TRPC4AP. Interacts with host PLSCR1; this interaction promotes ubiquitination and degradation of HBx and impairs HBx-mediated cell proliferation.</text>
</comment>
<comment type="subcellular location">
    <subcellularLocation>
        <location evidence="1">Host cytoplasm</location>
    </subcellularLocation>
    <subcellularLocation>
        <location evidence="1">Host nucleus</location>
    </subcellularLocation>
    <subcellularLocation>
        <location evidence="1">Host mitochondrion</location>
    </subcellularLocation>
    <text evidence="1">Mainly cytoplasmic as only a fraction is detected in the nucleus. In cytoplasm, a minor fraction associates with mitochondria or proteasomes.</text>
</comment>
<comment type="PTM">
    <text evidence="1">A fraction may be phosphorylated in insect cells and HepG2 cells, a human hepatoblastoma cell line. Phosphorylated in vitro by host protein kinase C or mitogen-activated protein kinase. N-acetylated in insect cells.</text>
</comment>
<comment type="similarity">
    <text evidence="1">Belongs to the orthohepadnavirus protein X family.</text>
</comment>
<comment type="caution">
    <text>Transcriptional activities should be taken with a grain of salt. As of 2007, all studies demonstrating in vivo interaction between protein X and transcriptional components were performed with significant overexpression of both proteins and in the absence of viral infection.</text>
</comment>